<reference key="1">
    <citation type="journal article" date="2000" name="Biochem. Biophys. Res. Commun.">
        <title>Molecular cloning and genomic structure of human frizzled-3 at chromosome 8p21.</title>
        <authorList>
            <person name="Kirikoshi H."/>
            <person name="Koike J."/>
            <person name="Sagara N."/>
            <person name="Saitoh T."/>
            <person name="Tokuhara M."/>
            <person name="Tanaka K."/>
            <person name="Sekihara H."/>
            <person name="Hirai M."/>
            <person name="Katoh M."/>
        </authorList>
    </citation>
    <scope>NUCLEOTIDE SEQUENCE [MRNA]</scope>
    <source>
        <tissue>Fetal brain</tissue>
    </source>
</reference>
<reference key="2">
    <citation type="journal article" date="2000" name="Biochem. Biophys. Res. Commun.">
        <title>Identification, gene structure and expression of human frizzled-3 (FZD3).</title>
        <authorList>
            <person name="Sala C.F."/>
            <person name="Formenti E."/>
            <person name="Terstappen G.C."/>
            <person name="Caricasole A."/>
        </authorList>
    </citation>
    <scope>NUCLEOTIDE SEQUENCE [MRNA]</scope>
    <source>
        <tissue>Fetal brain</tissue>
    </source>
</reference>
<reference key="3">
    <citation type="journal article" date="2001" name="J. Invest. Dermatol.">
        <title>Characterization of mouse frizzled-3 expression in hair follicle development and identification of the human homolog in keratinocytes.</title>
        <authorList>
            <person name="Hung B.S."/>
            <person name="Wang X.-Q."/>
            <person name="Cam G.R."/>
            <person name="Rothnagel J.A."/>
        </authorList>
    </citation>
    <scope>NUCLEOTIDE SEQUENCE [MRNA]</scope>
    <source>
        <tissue>Keratinocyte</tissue>
    </source>
</reference>
<reference key="4">
    <citation type="journal article" date="2004" name="Nat. Genet.">
        <title>Complete sequencing and characterization of 21,243 full-length human cDNAs.</title>
        <authorList>
            <person name="Ota T."/>
            <person name="Suzuki Y."/>
            <person name="Nishikawa T."/>
            <person name="Otsuki T."/>
            <person name="Sugiyama T."/>
            <person name="Irie R."/>
            <person name="Wakamatsu A."/>
            <person name="Hayashi K."/>
            <person name="Sato H."/>
            <person name="Nagai K."/>
            <person name="Kimura K."/>
            <person name="Makita H."/>
            <person name="Sekine M."/>
            <person name="Obayashi M."/>
            <person name="Nishi T."/>
            <person name="Shibahara T."/>
            <person name="Tanaka T."/>
            <person name="Ishii S."/>
            <person name="Yamamoto J."/>
            <person name="Saito K."/>
            <person name="Kawai Y."/>
            <person name="Isono Y."/>
            <person name="Nakamura Y."/>
            <person name="Nagahari K."/>
            <person name="Murakami K."/>
            <person name="Yasuda T."/>
            <person name="Iwayanagi T."/>
            <person name="Wagatsuma M."/>
            <person name="Shiratori A."/>
            <person name="Sudo H."/>
            <person name="Hosoiri T."/>
            <person name="Kaku Y."/>
            <person name="Kodaira H."/>
            <person name="Kondo H."/>
            <person name="Sugawara M."/>
            <person name="Takahashi M."/>
            <person name="Kanda K."/>
            <person name="Yokoi T."/>
            <person name="Furuya T."/>
            <person name="Kikkawa E."/>
            <person name="Omura Y."/>
            <person name="Abe K."/>
            <person name="Kamihara K."/>
            <person name="Katsuta N."/>
            <person name="Sato K."/>
            <person name="Tanikawa M."/>
            <person name="Yamazaki M."/>
            <person name="Ninomiya K."/>
            <person name="Ishibashi T."/>
            <person name="Yamashita H."/>
            <person name="Murakawa K."/>
            <person name="Fujimori K."/>
            <person name="Tanai H."/>
            <person name="Kimata M."/>
            <person name="Watanabe M."/>
            <person name="Hiraoka S."/>
            <person name="Chiba Y."/>
            <person name="Ishida S."/>
            <person name="Ono Y."/>
            <person name="Takiguchi S."/>
            <person name="Watanabe S."/>
            <person name="Yosida M."/>
            <person name="Hotuta T."/>
            <person name="Kusano J."/>
            <person name="Kanehori K."/>
            <person name="Takahashi-Fujii A."/>
            <person name="Hara H."/>
            <person name="Tanase T.-O."/>
            <person name="Nomura Y."/>
            <person name="Togiya S."/>
            <person name="Komai F."/>
            <person name="Hara R."/>
            <person name="Takeuchi K."/>
            <person name="Arita M."/>
            <person name="Imose N."/>
            <person name="Musashino K."/>
            <person name="Yuuki H."/>
            <person name="Oshima A."/>
            <person name="Sasaki N."/>
            <person name="Aotsuka S."/>
            <person name="Yoshikawa Y."/>
            <person name="Matsunawa H."/>
            <person name="Ichihara T."/>
            <person name="Shiohata N."/>
            <person name="Sano S."/>
            <person name="Moriya S."/>
            <person name="Momiyama H."/>
            <person name="Satoh N."/>
            <person name="Takami S."/>
            <person name="Terashima Y."/>
            <person name="Suzuki O."/>
            <person name="Nakagawa S."/>
            <person name="Senoh A."/>
            <person name="Mizoguchi H."/>
            <person name="Goto Y."/>
            <person name="Shimizu F."/>
            <person name="Wakebe H."/>
            <person name="Hishigaki H."/>
            <person name="Watanabe T."/>
            <person name="Sugiyama A."/>
            <person name="Takemoto M."/>
            <person name="Kawakami B."/>
            <person name="Yamazaki M."/>
            <person name="Watanabe K."/>
            <person name="Kumagai A."/>
            <person name="Itakura S."/>
            <person name="Fukuzumi Y."/>
            <person name="Fujimori Y."/>
            <person name="Komiyama M."/>
            <person name="Tashiro H."/>
            <person name="Tanigami A."/>
            <person name="Fujiwara T."/>
            <person name="Ono T."/>
            <person name="Yamada K."/>
            <person name="Fujii Y."/>
            <person name="Ozaki K."/>
            <person name="Hirao M."/>
            <person name="Ohmori Y."/>
            <person name="Kawabata A."/>
            <person name="Hikiji T."/>
            <person name="Kobatake N."/>
            <person name="Inagaki H."/>
            <person name="Ikema Y."/>
            <person name="Okamoto S."/>
            <person name="Okitani R."/>
            <person name="Kawakami T."/>
            <person name="Noguchi S."/>
            <person name="Itoh T."/>
            <person name="Shigeta K."/>
            <person name="Senba T."/>
            <person name="Matsumura K."/>
            <person name="Nakajima Y."/>
            <person name="Mizuno T."/>
            <person name="Morinaga M."/>
            <person name="Sasaki M."/>
            <person name="Togashi T."/>
            <person name="Oyama M."/>
            <person name="Hata H."/>
            <person name="Watanabe M."/>
            <person name="Komatsu T."/>
            <person name="Mizushima-Sugano J."/>
            <person name="Satoh T."/>
            <person name="Shirai Y."/>
            <person name="Takahashi Y."/>
            <person name="Nakagawa K."/>
            <person name="Okumura K."/>
            <person name="Nagase T."/>
            <person name="Nomura N."/>
            <person name="Kikuchi H."/>
            <person name="Masuho Y."/>
            <person name="Yamashita R."/>
            <person name="Nakai K."/>
            <person name="Yada T."/>
            <person name="Nakamura Y."/>
            <person name="Ohara O."/>
            <person name="Isogai T."/>
            <person name="Sugano S."/>
        </authorList>
    </citation>
    <scope>NUCLEOTIDE SEQUENCE [LARGE SCALE MRNA]</scope>
    <source>
        <tissue>Brain</tissue>
    </source>
</reference>
<reference key="5">
    <citation type="journal article" date="2004" name="Protein Sci.">
        <title>Signal peptide prediction based on analysis of experimentally verified cleavage sites.</title>
        <authorList>
            <person name="Zhang Z."/>
            <person name="Henzel W.J."/>
        </authorList>
    </citation>
    <scope>PROTEIN SEQUENCE OF 23-37</scope>
</reference>
<reference key="6">
    <citation type="journal article" date="2012" name="Hum. Mutat.">
        <title>FZD6 is a novel gene for human neural tube defects.</title>
        <authorList>
            <person name="De Marco P."/>
            <person name="Merello E."/>
            <person name="Rossi A."/>
            <person name="Piatelli G."/>
            <person name="Cama A."/>
            <person name="Kibar Z."/>
            <person name="Capra V."/>
        </authorList>
    </citation>
    <scope>VARIANTS SER-4; MET-199 AND VAL-545</scope>
</reference>
<keyword id="KW-0002">3D-structure</keyword>
<keyword id="KW-0025">Alternative splicing</keyword>
<keyword id="KW-1003">Cell membrane</keyword>
<keyword id="KW-0217">Developmental protein</keyword>
<keyword id="KW-0903">Direct protein sequencing</keyword>
<keyword id="KW-1015">Disulfide bond</keyword>
<keyword id="KW-0297">G-protein coupled receptor</keyword>
<keyword id="KW-0325">Glycoprotein</keyword>
<keyword id="KW-0472">Membrane</keyword>
<keyword id="KW-0524">Neurogenesis</keyword>
<keyword id="KW-1267">Proteomics identification</keyword>
<keyword id="KW-0675">Receptor</keyword>
<keyword id="KW-1185">Reference proteome</keyword>
<keyword id="KW-0732">Signal</keyword>
<keyword id="KW-0807">Transducer</keyword>
<keyword id="KW-0812">Transmembrane</keyword>
<keyword id="KW-1133">Transmembrane helix</keyword>
<keyword id="KW-0832">Ubl conjugation</keyword>
<keyword id="KW-0879">Wnt signaling pathway</keyword>
<proteinExistence type="evidence at protein level"/>
<evidence type="ECO:0000250" key="1"/>
<evidence type="ECO:0000250" key="2">
    <source>
        <dbReference type="UniProtKB" id="Q61086"/>
    </source>
</evidence>
<evidence type="ECO:0000255" key="3"/>
<evidence type="ECO:0000255" key="4">
    <source>
        <dbReference type="PROSITE-ProRule" id="PRU00090"/>
    </source>
</evidence>
<evidence type="ECO:0000256" key="5">
    <source>
        <dbReference type="SAM" id="MobiDB-lite"/>
    </source>
</evidence>
<evidence type="ECO:0000269" key="6">
    <source>
    </source>
</evidence>
<evidence type="ECO:0000269" key="7">
    <source>
    </source>
</evidence>
<evidence type="ECO:0000305" key="8"/>
<evidence type="ECO:0007829" key="9">
    <source>
        <dbReference type="PDB" id="8JHC"/>
    </source>
</evidence>
<evidence type="ECO:0007829" key="10">
    <source>
        <dbReference type="PDB" id="8JHI"/>
    </source>
</evidence>
<evidence type="ECO:0007829" key="11">
    <source>
        <dbReference type="PDB" id="8Q7O"/>
    </source>
</evidence>
<evidence type="ECO:0007829" key="12">
    <source>
        <dbReference type="PDB" id="8QW4"/>
    </source>
</evidence>
<dbReference type="EMBL" id="AB039723">
    <property type="protein sequence ID" value="BAA94968.1"/>
    <property type="molecule type" value="mRNA"/>
</dbReference>
<dbReference type="EMBL" id="AJ272427">
    <property type="protein sequence ID" value="CAB89114.1"/>
    <property type="molecule type" value="mRNA"/>
</dbReference>
<dbReference type="EMBL" id="AY005130">
    <property type="protein sequence ID" value="AAF89088.1"/>
    <property type="molecule type" value="mRNA"/>
</dbReference>
<dbReference type="EMBL" id="AK291480">
    <property type="protein sequence ID" value="BAF84169.1"/>
    <property type="molecule type" value="mRNA"/>
</dbReference>
<dbReference type="CCDS" id="CCDS6069.1">
    <molecule id="Q9NPG1-1"/>
</dbReference>
<dbReference type="PIR" id="JC7312">
    <property type="entry name" value="JC7312"/>
</dbReference>
<dbReference type="RefSeq" id="NP_001399840.1">
    <molecule id="Q9NPG1-1"/>
    <property type="nucleotide sequence ID" value="NM_001412911.1"/>
</dbReference>
<dbReference type="RefSeq" id="NP_059108.1">
    <molecule id="Q9NPG1-1"/>
    <property type="nucleotide sequence ID" value="NM_017412.4"/>
</dbReference>
<dbReference type="RefSeq" id="NP_665873.1">
    <molecule id="Q9NPG1-1"/>
    <property type="nucleotide sequence ID" value="NM_145866.2"/>
</dbReference>
<dbReference type="PDB" id="8JHC">
    <property type="method" value="EM"/>
    <property type="resolution" value="3.30 A"/>
    <property type="chains" value="R=22-399, R=410-514"/>
</dbReference>
<dbReference type="PDB" id="8JHI">
    <property type="method" value="EM"/>
    <property type="resolution" value="3.20 A"/>
    <property type="chains" value="R=23-542"/>
</dbReference>
<dbReference type="PDB" id="8Q7O">
    <property type="method" value="X-ray"/>
    <property type="resolution" value="1.76 A"/>
    <property type="chains" value="C/D=26-138"/>
</dbReference>
<dbReference type="PDB" id="8QW4">
    <property type="method" value="EM"/>
    <property type="resolution" value="2.90 A"/>
    <property type="chains" value="A=1-517"/>
</dbReference>
<dbReference type="PDBsum" id="8JHC"/>
<dbReference type="PDBsum" id="8JHI"/>
<dbReference type="PDBsum" id="8Q7O"/>
<dbReference type="PDBsum" id="8QW4"/>
<dbReference type="EMDB" id="EMD-18680"/>
<dbReference type="EMDB" id="EMD-36262"/>
<dbReference type="EMDB" id="EMD-36266"/>
<dbReference type="SMR" id="Q9NPG1"/>
<dbReference type="BioGRID" id="113689">
    <property type="interactions" value="26"/>
</dbReference>
<dbReference type="FunCoup" id="Q9NPG1">
    <property type="interactions" value="1412"/>
</dbReference>
<dbReference type="IntAct" id="Q9NPG1">
    <property type="interactions" value="17"/>
</dbReference>
<dbReference type="STRING" id="9606.ENSP00000240093"/>
<dbReference type="GlyCosmos" id="Q9NPG1">
    <property type="glycosylation" value="3 sites, No reported glycans"/>
</dbReference>
<dbReference type="GlyGen" id="Q9NPG1">
    <property type="glycosylation" value="4 sites, 2 N-linked glycans (2 sites)"/>
</dbReference>
<dbReference type="iPTMnet" id="Q9NPG1"/>
<dbReference type="PhosphoSitePlus" id="Q9NPG1"/>
<dbReference type="SwissPalm" id="Q9NPG1"/>
<dbReference type="BioMuta" id="FZD3"/>
<dbReference type="DMDM" id="17433071"/>
<dbReference type="jPOST" id="Q9NPG1"/>
<dbReference type="MassIVE" id="Q9NPG1"/>
<dbReference type="PaxDb" id="9606-ENSP00000437489"/>
<dbReference type="PeptideAtlas" id="Q9NPG1"/>
<dbReference type="ProteomicsDB" id="81989">
    <molecule id="Q9NPG1-1"/>
</dbReference>
<dbReference type="Antibodypedia" id="10432">
    <property type="antibodies" value="450 antibodies from 35 providers"/>
</dbReference>
<dbReference type="DNASU" id="7976"/>
<dbReference type="Ensembl" id="ENST00000240093.8">
    <molecule id="Q9NPG1-1"/>
    <property type="protein sequence ID" value="ENSP00000240093.3"/>
    <property type="gene ID" value="ENSG00000104290.11"/>
</dbReference>
<dbReference type="Ensembl" id="ENST00000537916.2">
    <molecule id="Q9NPG1-1"/>
    <property type="protein sequence ID" value="ENSP00000437489.1"/>
    <property type="gene ID" value="ENSG00000104290.11"/>
</dbReference>
<dbReference type="GeneID" id="7976"/>
<dbReference type="KEGG" id="hsa:7976"/>
<dbReference type="MANE-Select" id="ENST00000240093.8">
    <property type="protein sequence ID" value="ENSP00000240093.3"/>
    <property type="RefSeq nucleotide sequence ID" value="NM_017412.4"/>
    <property type="RefSeq protein sequence ID" value="NP_059108.1"/>
</dbReference>
<dbReference type="UCSC" id="uc003xgx.4">
    <molecule id="Q9NPG1-1"/>
    <property type="organism name" value="human"/>
</dbReference>
<dbReference type="AGR" id="HGNC:4041"/>
<dbReference type="CTD" id="7976"/>
<dbReference type="DisGeNET" id="7976"/>
<dbReference type="GeneCards" id="FZD3"/>
<dbReference type="HGNC" id="HGNC:4041">
    <property type="gene designation" value="FZD3"/>
</dbReference>
<dbReference type="HPA" id="ENSG00000104290">
    <property type="expression patterns" value="Tissue enhanced (retina)"/>
</dbReference>
<dbReference type="MalaCards" id="FZD3"/>
<dbReference type="MIM" id="606143">
    <property type="type" value="gene"/>
</dbReference>
<dbReference type="neXtProt" id="NX_Q9NPG1"/>
<dbReference type="OpenTargets" id="ENSG00000104290"/>
<dbReference type="PharmGKB" id="PA28458"/>
<dbReference type="VEuPathDB" id="HostDB:ENSG00000104290"/>
<dbReference type="eggNOG" id="KOG3577">
    <property type="taxonomic scope" value="Eukaryota"/>
</dbReference>
<dbReference type="GeneTree" id="ENSGT00940000156491"/>
<dbReference type="HOGENOM" id="CLU_007873_4_1_1"/>
<dbReference type="InParanoid" id="Q9NPG1"/>
<dbReference type="OMA" id="MFCYLWL"/>
<dbReference type="OrthoDB" id="10053709at2759"/>
<dbReference type="PAN-GO" id="Q9NPG1">
    <property type="GO annotations" value="6 GO annotations based on evolutionary models"/>
</dbReference>
<dbReference type="PhylomeDB" id="Q9NPG1"/>
<dbReference type="TreeFam" id="TF317907"/>
<dbReference type="PathwayCommons" id="Q9NPG1"/>
<dbReference type="Reactome" id="R-HSA-373080">
    <property type="pathway name" value="Class B/2 (Secretin family receptors)"/>
</dbReference>
<dbReference type="Reactome" id="R-HSA-4086398">
    <property type="pathway name" value="Ca2+ pathway"/>
</dbReference>
<dbReference type="Reactome" id="R-HSA-4086400">
    <property type="pathway name" value="PCP/CE pathway"/>
</dbReference>
<dbReference type="Reactome" id="R-HSA-4608870">
    <property type="pathway name" value="Asymmetric localization of PCP proteins"/>
</dbReference>
<dbReference type="SignaLink" id="Q9NPG1"/>
<dbReference type="SIGNOR" id="Q9NPG1"/>
<dbReference type="BioGRID-ORCS" id="7976">
    <property type="hits" value="15 hits in 1150 CRISPR screens"/>
</dbReference>
<dbReference type="ChiTaRS" id="FZD3">
    <property type="organism name" value="human"/>
</dbReference>
<dbReference type="GeneWiki" id="FZD3"/>
<dbReference type="GenomeRNAi" id="7976"/>
<dbReference type="Pharos" id="Q9NPG1">
    <property type="development level" value="Tbio"/>
</dbReference>
<dbReference type="PRO" id="PR:Q9NPG1"/>
<dbReference type="Proteomes" id="UP000005640">
    <property type="component" value="Chromosome 8"/>
</dbReference>
<dbReference type="RNAct" id="Q9NPG1">
    <property type="molecule type" value="protein"/>
</dbReference>
<dbReference type="Bgee" id="ENSG00000104290">
    <property type="expression patterns" value="Expressed in Brodmann (1909) area 23 and 187 other cell types or tissues"/>
</dbReference>
<dbReference type="ExpressionAtlas" id="Q9NPG1">
    <property type="expression patterns" value="baseline and differential"/>
</dbReference>
<dbReference type="GO" id="GO:0016324">
    <property type="term" value="C:apical plasma membrane"/>
    <property type="evidence" value="ECO:0007669"/>
    <property type="project" value="UniProtKB-SubCell"/>
</dbReference>
<dbReference type="GO" id="GO:0030424">
    <property type="term" value="C:axon"/>
    <property type="evidence" value="ECO:0007669"/>
    <property type="project" value="Ensembl"/>
</dbReference>
<dbReference type="GO" id="GO:0009986">
    <property type="term" value="C:cell surface"/>
    <property type="evidence" value="ECO:0007669"/>
    <property type="project" value="UniProtKB-SubCell"/>
</dbReference>
<dbReference type="GO" id="GO:0005737">
    <property type="term" value="C:cytoplasm"/>
    <property type="evidence" value="ECO:0000314"/>
    <property type="project" value="BHF-UCL"/>
</dbReference>
<dbReference type="GO" id="GO:0030425">
    <property type="term" value="C:dendrite"/>
    <property type="evidence" value="ECO:0007669"/>
    <property type="project" value="Ensembl"/>
</dbReference>
<dbReference type="GO" id="GO:0032433">
    <property type="term" value="C:filopodium tip"/>
    <property type="evidence" value="ECO:0007669"/>
    <property type="project" value="Ensembl"/>
</dbReference>
<dbReference type="GO" id="GO:0098978">
    <property type="term" value="C:glutamatergic synapse"/>
    <property type="evidence" value="ECO:0007669"/>
    <property type="project" value="Ensembl"/>
</dbReference>
<dbReference type="GO" id="GO:0016328">
    <property type="term" value="C:lateral plasma membrane"/>
    <property type="evidence" value="ECO:0007669"/>
    <property type="project" value="Ensembl"/>
</dbReference>
<dbReference type="GO" id="GO:0043025">
    <property type="term" value="C:neuronal cell body"/>
    <property type="evidence" value="ECO:0007669"/>
    <property type="project" value="Ensembl"/>
</dbReference>
<dbReference type="GO" id="GO:0005886">
    <property type="term" value="C:plasma membrane"/>
    <property type="evidence" value="ECO:0000314"/>
    <property type="project" value="BHF-UCL"/>
</dbReference>
<dbReference type="GO" id="GO:0048787">
    <property type="term" value="C:presynaptic active zone membrane"/>
    <property type="evidence" value="ECO:0007669"/>
    <property type="project" value="Ensembl"/>
</dbReference>
<dbReference type="GO" id="GO:0004930">
    <property type="term" value="F:G protein-coupled receptor activity"/>
    <property type="evidence" value="ECO:0007669"/>
    <property type="project" value="UniProtKB-KW"/>
</dbReference>
<dbReference type="GO" id="GO:0030165">
    <property type="term" value="F:PDZ domain binding"/>
    <property type="evidence" value="ECO:0000353"/>
    <property type="project" value="UniProtKB"/>
</dbReference>
<dbReference type="GO" id="GO:0042813">
    <property type="term" value="F:Wnt receptor activity"/>
    <property type="evidence" value="ECO:0000318"/>
    <property type="project" value="GO_Central"/>
</dbReference>
<dbReference type="GO" id="GO:0017147">
    <property type="term" value="F:Wnt-protein binding"/>
    <property type="evidence" value="ECO:0000353"/>
    <property type="project" value="UniProtKB"/>
</dbReference>
<dbReference type="GO" id="GO:0060070">
    <property type="term" value="P:canonical Wnt signaling pathway"/>
    <property type="evidence" value="ECO:0000314"/>
    <property type="project" value="UniProtKB"/>
</dbReference>
<dbReference type="GO" id="GO:0033278">
    <property type="term" value="P:cell proliferation in midbrain"/>
    <property type="evidence" value="ECO:0007669"/>
    <property type="project" value="Ensembl"/>
</dbReference>
<dbReference type="GO" id="GO:0071679">
    <property type="term" value="P:commissural neuron axon guidance"/>
    <property type="evidence" value="ECO:0007669"/>
    <property type="project" value="Ensembl"/>
</dbReference>
<dbReference type="GO" id="GO:0036514">
    <property type="term" value="P:dopaminergic neuron axon guidance"/>
    <property type="evidence" value="ECO:0000250"/>
    <property type="project" value="ParkinsonsUK-UCL"/>
</dbReference>
<dbReference type="GO" id="GO:0001736">
    <property type="term" value="P:establishment of planar polarity"/>
    <property type="evidence" value="ECO:0007669"/>
    <property type="project" value="Ensembl"/>
</dbReference>
<dbReference type="GO" id="GO:0001942">
    <property type="term" value="P:hair follicle development"/>
    <property type="evidence" value="ECO:0007669"/>
    <property type="project" value="Ensembl"/>
</dbReference>
<dbReference type="GO" id="GO:0042472">
    <property type="term" value="P:inner ear morphogenesis"/>
    <property type="evidence" value="ECO:0007669"/>
    <property type="project" value="Ensembl"/>
</dbReference>
<dbReference type="GO" id="GO:1904693">
    <property type="term" value="P:midbrain morphogenesis"/>
    <property type="evidence" value="ECO:0000304"/>
    <property type="project" value="ParkinsonsUK-UCL"/>
</dbReference>
<dbReference type="GO" id="GO:0097475">
    <property type="term" value="P:motor neuron migration"/>
    <property type="evidence" value="ECO:0007669"/>
    <property type="project" value="Ensembl"/>
</dbReference>
<dbReference type="GO" id="GO:1900118">
    <property type="term" value="P:negative regulation of execution phase of apoptosis"/>
    <property type="evidence" value="ECO:0000250"/>
    <property type="project" value="UniProtKB"/>
</dbReference>
<dbReference type="GO" id="GO:0045976">
    <property type="term" value="P:negative regulation of mitotic cell cycle, embryonic"/>
    <property type="evidence" value="ECO:0000250"/>
    <property type="project" value="UniProtKB"/>
</dbReference>
<dbReference type="GO" id="GO:0001843">
    <property type="term" value="P:neural tube closure"/>
    <property type="evidence" value="ECO:0007669"/>
    <property type="project" value="Ensembl"/>
</dbReference>
<dbReference type="GO" id="GO:0030182">
    <property type="term" value="P:neuron differentiation"/>
    <property type="evidence" value="ECO:0000250"/>
    <property type="project" value="UniProtKB"/>
</dbReference>
<dbReference type="GO" id="GO:0035567">
    <property type="term" value="P:non-canonical Wnt signaling pathway"/>
    <property type="evidence" value="ECO:0000318"/>
    <property type="project" value="GO_Central"/>
</dbReference>
<dbReference type="GO" id="GO:0002052">
    <property type="term" value="P:positive regulation of neuroblast proliferation"/>
    <property type="evidence" value="ECO:0000250"/>
    <property type="project" value="UniProtKB"/>
</dbReference>
<dbReference type="GO" id="GO:0036342">
    <property type="term" value="P:post-anal tail morphogenesis"/>
    <property type="evidence" value="ECO:0007669"/>
    <property type="project" value="Ensembl"/>
</dbReference>
<dbReference type="GO" id="GO:0051602">
    <property type="term" value="P:response to electrical stimulus"/>
    <property type="evidence" value="ECO:0007669"/>
    <property type="project" value="Ensembl"/>
</dbReference>
<dbReference type="GO" id="GO:0009410">
    <property type="term" value="P:response to xenobiotic stimulus"/>
    <property type="evidence" value="ECO:0007669"/>
    <property type="project" value="Ensembl"/>
</dbReference>
<dbReference type="GO" id="GO:0036515">
    <property type="term" value="P:serotonergic neuron axon guidance"/>
    <property type="evidence" value="ECO:0000250"/>
    <property type="project" value="ParkinsonsUK-UCL"/>
</dbReference>
<dbReference type="GO" id="GO:0061549">
    <property type="term" value="P:sympathetic ganglion development"/>
    <property type="evidence" value="ECO:0000250"/>
    <property type="project" value="UniProtKB"/>
</dbReference>
<dbReference type="GO" id="GO:0060071">
    <property type="term" value="P:Wnt signaling pathway, planar cell polarity pathway"/>
    <property type="evidence" value="ECO:0000303"/>
    <property type="project" value="ParkinsonsUK-UCL"/>
</dbReference>
<dbReference type="CDD" id="cd15033">
    <property type="entry name" value="7tmF_FZD3"/>
    <property type="match status" value="1"/>
</dbReference>
<dbReference type="CDD" id="cd07449">
    <property type="entry name" value="CRD_FZ3"/>
    <property type="match status" value="1"/>
</dbReference>
<dbReference type="FunFam" id="1.20.1070.10:FF:000036">
    <property type="entry name" value="frizzled-3 isoform X1"/>
    <property type="match status" value="1"/>
</dbReference>
<dbReference type="FunFam" id="1.10.2000.10:FF:000006">
    <property type="entry name" value="Frizzled-3 protein"/>
    <property type="match status" value="1"/>
</dbReference>
<dbReference type="Gene3D" id="1.10.2000.10">
    <property type="entry name" value="Frizzled cysteine-rich domain"/>
    <property type="match status" value="1"/>
</dbReference>
<dbReference type="Gene3D" id="1.20.1070.10">
    <property type="entry name" value="Rhodopsin 7-helix transmembrane proteins"/>
    <property type="match status" value="1"/>
</dbReference>
<dbReference type="InterPro" id="IPR015526">
    <property type="entry name" value="Frizzled/SFRP"/>
</dbReference>
<dbReference type="InterPro" id="IPR000539">
    <property type="entry name" value="Frizzled/Smoothened_7TM"/>
</dbReference>
<dbReference type="InterPro" id="IPR020067">
    <property type="entry name" value="Frizzled_dom"/>
</dbReference>
<dbReference type="InterPro" id="IPR036790">
    <property type="entry name" value="Frizzled_dom_sf"/>
</dbReference>
<dbReference type="InterPro" id="IPR041769">
    <property type="entry name" value="FZ3_CRD"/>
</dbReference>
<dbReference type="InterPro" id="IPR017981">
    <property type="entry name" value="GPCR_2-like_7TM"/>
</dbReference>
<dbReference type="PANTHER" id="PTHR11309">
    <property type="entry name" value="FRIZZLED"/>
    <property type="match status" value="1"/>
</dbReference>
<dbReference type="PANTHER" id="PTHR11309:SF22">
    <property type="entry name" value="FRIZZLED-3"/>
    <property type="match status" value="1"/>
</dbReference>
<dbReference type="Pfam" id="PF01534">
    <property type="entry name" value="Frizzled"/>
    <property type="match status" value="1"/>
</dbReference>
<dbReference type="Pfam" id="PF01392">
    <property type="entry name" value="Fz"/>
    <property type="match status" value="1"/>
</dbReference>
<dbReference type="PRINTS" id="PR00489">
    <property type="entry name" value="FRIZZLED"/>
</dbReference>
<dbReference type="SMART" id="SM00063">
    <property type="entry name" value="FRI"/>
    <property type="match status" value="1"/>
</dbReference>
<dbReference type="SMART" id="SM01330">
    <property type="entry name" value="Frizzled"/>
    <property type="match status" value="1"/>
</dbReference>
<dbReference type="SUPFAM" id="SSF63501">
    <property type="entry name" value="Frizzled cysteine-rich domain"/>
    <property type="match status" value="1"/>
</dbReference>
<dbReference type="PROSITE" id="PS50038">
    <property type="entry name" value="FZ"/>
    <property type="match status" value="1"/>
</dbReference>
<dbReference type="PROSITE" id="PS50261">
    <property type="entry name" value="G_PROTEIN_RECEP_F2_4"/>
    <property type="match status" value="1"/>
</dbReference>
<accession>Q9NPG1</accession>
<accession>A8K615</accession>
<comment type="function">
    <text evidence="2">Receptor for Wnt proteins. Most of frizzled receptors are coupled to the beta-catenin canonical signaling pathway, which leads to the activation of disheveled proteins, inhibition of GSK-3 kinase, nuclear accumulation of beta-catenin and activation of Wnt target genes. A second signaling pathway involving PKC and calcium fluxes has been seen for some family members, but it is not yet clear if it represents a distinct pathway or if it can be integrated in the canonical pathway, as PKC seems to be required for Wnt-mediated inactivation of GSK-3 kinase. Both pathways seem to involve interactions with G-proteins. Activation by Wnt5A stimulates PKC activity via a G-protein-dependent mechanism. Involved in transduction and intercellular transmission of polarity information during tissue morphogenesis and/or in differentiated tissues. Plays a role in controlling early axon growth and guidance processes necessary for the formation of a subset of central and peripheral major fiber tracts. Required for the development of major fiber tracts in the central nervous system, including: the anterior commissure, the corpus callosum, the thalamocortical, corticothalamic and nigrostriatal tracts, the corticospinal tract, the fasciculus retroflexus, the mammillothalamic tract, the medial lemniscus, and ascending fiber tracts from the spinal cord to the brain. In the peripheral nervous system, controls axon growth in distinct populations of cranial and spinal motor neurons, including the facial branchimotor nerve, the hypoglossal nerve, the phrenic nerve, and motor nerves innervating dorsal limbs. Involved in the migration of cranial neural crest cells. May also be implicated in the transmission of sensory information from the trunk and limbs to the brain. Controls commissural sensory axons guidance after midline crossing along the anterior-posterior axis in the developing spinal cord in a Wnt-dependent signaling pathway. Together with FZD6, is involved in the neural tube closure and plays a role in the regulation of the establishment of planar cell polarity (PCP), particularly in the orientation of asymmetric bundles of stereocilia on the apical faces of a subset of auditory and vestibular sensory cells located in the inner ear. Promotes neurogenesis by maintaining sympathetic neuroblasts within the cell cycle in a beta-catenin-dependent manner (By similarity).</text>
</comment>
<comment type="subunit">
    <text evidence="1">Interacts with VANGL2.</text>
</comment>
<comment type="subcellular location">
    <subcellularLocation>
        <location>Membrane</location>
        <topology>Multi-pass membrane protein</topology>
    </subcellularLocation>
    <subcellularLocation>
        <location evidence="1">Cell membrane</location>
        <topology evidence="1">Multi-pass membrane protein</topology>
    </subcellularLocation>
    <subcellularLocation>
        <location evidence="2">Cell surface</location>
    </subcellularLocation>
    <subcellularLocation>
        <location evidence="2">Apical cell membrane</location>
        <topology>Multi-pass membrane protein</topology>
    </subcellularLocation>
    <text evidence="2">Colocalizes with FZD6 at the apical face of the cell (By similarity).</text>
</comment>
<comment type="alternative products">
    <event type="alternative splicing"/>
    <isoform>
        <id>Q9NPG1-1</id>
        <name>Long</name>
        <sequence type="displayed"/>
    </isoform>
    <isoform>
        <id>Q9NPG1-2</id>
        <name>Short</name>
        <name>FZD3deltaC</name>
        <sequence type="not described"/>
    </isoform>
</comment>
<comment type="tissue specificity">
    <text>Widely expressed. Relatively high expression in the CNS, including regions of the limbic system, in kidney, pancreas, skeletal muscle, uterus and testis.</text>
</comment>
<comment type="domain">
    <text evidence="1">Lys-Thr-X-X-X-Trp motif interacts with the PDZ domain of Dvl (Disheveled) family members and is involved in the activation of the Wnt/beta-catenin signaling pathway.</text>
</comment>
<comment type="domain">
    <text evidence="1">The FZ domain is involved in binding with Wnt ligands.</text>
</comment>
<comment type="PTM">
    <text evidence="1">Ubiquitinated by ZNRF3, leading to its degradation by the proteasome.</text>
</comment>
<comment type="similarity">
    <text evidence="8">Belongs to the G-protein coupled receptor Fz/Smo family.</text>
</comment>
<organism>
    <name type="scientific">Homo sapiens</name>
    <name type="common">Human</name>
    <dbReference type="NCBI Taxonomy" id="9606"/>
    <lineage>
        <taxon>Eukaryota</taxon>
        <taxon>Metazoa</taxon>
        <taxon>Chordata</taxon>
        <taxon>Craniata</taxon>
        <taxon>Vertebrata</taxon>
        <taxon>Euteleostomi</taxon>
        <taxon>Mammalia</taxon>
        <taxon>Eutheria</taxon>
        <taxon>Euarchontoglires</taxon>
        <taxon>Primates</taxon>
        <taxon>Haplorrhini</taxon>
        <taxon>Catarrhini</taxon>
        <taxon>Hominidae</taxon>
        <taxon>Homo</taxon>
    </lineage>
</organism>
<protein>
    <recommendedName>
        <fullName>Frizzled-3</fullName>
        <shortName>Fz-3</shortName>
        <shortName>hFz3</shortName>
    </recommendedName>
</protein>
<sequence length="666" mass="76263">MAMTWIVFSLWPLTVFMGHIGGHSLFSCEPITLRMCQDLPYNTTFMPNLLNHYDQQTAALAMEPFHPMVNLDCSRDFRPFLCALYAPICMEYGRVTLPCRRLCQRAYSECSKLMEMFGVPWPEDMECSRFPDCDEPYPRLVDLNLAGEPTEGAPVAVQRDYGFWCPRELKIDPDLGYSFLHVRDCSPPCPNMYFRREELSFARYFIGLISIICLSATLFTFLTFLIDVTRFRYPERPIIFYAVCYMMVSLIFFIGFLLEDRVACNASIPAQYKASTVTQGSHNKACTMLFMILYFFTMAGSVWWVILTITWFLAAVPKWGSEAIEKKALLFHASAWGIPGTLTIILLAMNKIEGDNISGVCFVGLYDVDALRYFVLAPLCLYVVVGVSLLLAGIISLNRVRIEIPLEKENQDKLVKFMIRIGVFSILYLVPLLVVIGCYFYEQAYRGIWETTWIQERCREYHIPCPYQVTQMSRPDLILFLMKYLMALIVGIPSVFWVGSKKTCFEWASFFHGRRKKEIVNESRQVLQEPDFAQSLLRDPNTPIIRKSRGTSTQGTSTHASSTQLAMVDDQRSKAGSIHSKVSSYHGSLHRSRDGRYTPCSYRGMEERLPHGSMSRLTDHSRHSSSHRLNEQSRHSSIRDLSNNPMTHITHGTSMNRVIEEDGTSA</sequence>
<gene>
    <name type="primary">FZD3</name>
</gene>
<name>FZD3_HUMAN</name>
<feature type="signal peptide" evidence="6">
    <location>
        <begin position="1"/>
        <end position="22"/>
    </location>
</feature>
<feature type="chain" id="PRO_0000012982" description="Frizzled-3">
    <location>
        <begin position="23"/>
        <end position="666"/>
    </location>
</feature>
<feature type="topological domain" description="Extracellular" evidence="3">
    <location>
        <begin position="23"/>
        <end position="205"/>
    </location>
</feature>
<feature type="transmembrane region" description="Helical; Name=1" evidence="3">
    <location>
        <begin position="206"/>
        <end position="226"/>
    </location>
</feature>
<feature type="topological domain" description="Cytoplasmic" evidence="3">
    <location>
        <begin position="227"/>
        <end position="237"/>
    </location>
</feature>
<feature type="transmembrane region" description="Helical; Name=2" evidence="3">
    <location>
        <begin position="238"/>
        <end position="258"/>
    </location>
</feature>
<feature type="topological domain" description="Extracellular" evidence="3">
    <location>
        <begin position="259"/>
        <end position="288"/>
    </location>
</feature>
<feature type="transmembrane region" description="Helical; Name=3" evidence="3">
    <location>
        <begin position="289"/>
        <end position="309"/>
    </location>
</feature>
<feature type="topological domain" description="Cytoplasmic" evidence="3">
    <location>
        <begin position="310"/>
        <end position="328"/>
    </location>
</feature>
<feature type="transmembrane region" description="Helical; Name=4" evidence="3">
    <location>
        <begin position="329"/>
        <end position="349"/>
    </location>
</feature>
<feature type="topological domain" description="Extracellular" evidence="3">
    <location>
        <begin position="350"/>
        <end position="374"/>
    </location>
</feature>
<feature type="transmembrane region" description="Helical; Name=5" evidence="3">
    <location>
        <begin position="375"/>
        <end position="395"/>
    </location>
</feature>
<feature type="topological domain" description="Cytoplasmic" evidence="3">
    <location>
        <begin position="396"/>
        <end position="420"/>
    </location>
</feature>
<feature type="transmembrane region" description="Helical; Name=6" evidence="3">
    <location>
        <begin position="421"/>
        <end position="441"/>
    </location>
</feature>
<feature type="topological domain" description="Extracellular" evidence="3">
    <location>
        <begin position="442"/>
        <end position="477"/>
    </location>
</feature>
<feature type="transmembrane region" description="Helical; Name=7" evidence="3">
    <location>
        <begin position="478"/>
        <end position="498"/>
    </location>
</feature>
<feature type="topological domain" description="Cytoplasmic" evidence="3">
    <location>
        <begin position="499"/>
        <end position="666"/>
    </location>
</feature>
<feature type="domain" description="FZ" evidence="4">
    <location>
        <begin position="23"/>
        <end position="136"/>
    </location>
</feature>
<feature type="region of interest" description="Disordered" evidence="5">
    <location>
        <begin position="538"/>
        <end position="666"/>
    </location>
</feature>
<feature type="short sequence motif" description="Lys-Thr-X-X-X-Trp motif, mediates interaction with the PDZ domain of Dvl family members" evidence="1">
    <location>
        <begin position="502"/>
        <end position="507"/>
    </location>
</feature>
<feature type="compositionally biased region" description="Polar residues" evidence="5">
    <location>
        <begin position="550"/>
        <end position="565"/>
    </location>
</feature>
<feature type="compositionally biased region" description="Basic and acidic residues" evidence="5">
    <location>
        <begin position="617"/>
        <end position="638"/>
    </location>
</feature>
<feature type="compositionally biased region" description="Polar residues" evidence="5">
    <location>
        <begin position="639"/>
        <end position="656"/>
    </location>
</feature>
<feature type="glycosylation site" description="N-linked (GlcNAc...) asparagine" evidence="3">
    <location>
        <position position="42"/>
    </location>
</feature>
<feature type="glycosylation site" description="N-linked (GlcNAc...) asparagine" evidence="3">
    <location>
        <position position="265"/>
    </location>
</feature>
<feature type="glycosylation site" description="N-linked (GlcNAc...) asparagine" evidence="3">
    <location>
        <position position="356"/>
    </location>
</feature>
<feature type="disulfide bond" evidence="4">
    <location>
        <begin position="28"/>
        <end position="89"/>
    </location>
</feature>
<feature type="disulfide bond" evidence="4">
    <location>
        <begin position="36"/>
        <end position="82"/>
    </location>
</feature>
<feature type="disulfide bond" evidence="4">
    <location>
        <begin position="73"/>
        <end position="110"/>
    </location>
</feature>
<feature type="disulfide bond" evidence="4">
    <location>
        <begin position="99"/>
        <end position="133"/>
    </location>
</feature>
<feature type="disulfide bond" evidence="4">
    <location>
        <begin position="103"/>
        <end position="127"/>
    </location>
</feature>
<feature type="sequence variant" id="VAR_066960" description="In dbSNP:rs140115204." evidence="7">
    <original>T</original>
    <variation>S</variation>
    <location>
        <position position="4"/>
    </location>
</feature>
<feature type="sequence variant" id="VAR_066961" description="In dbSNP:rs757589666." evidence="7">
    <original>L</original>
    <variation>M</variation>
    <location>
        <position position="199"/>
    </location>
</feature>
<feature type="sequence variant" id="VAR_066962" description="In dbSNP:rs199839949." evidence="7">
    <original>I</original>
    <variation>V</variation>
    <location>
        <position position="545"/>
    </location>
</feature>
<feature type="sequence conflict" description="In Ref. 4; BAF84169." evidence="8" ref="4">
    <original>C</original>
    <variation>R</variation>
    <location>
        <position position="127"/>
    </location>
</feature>
<feature type="sequence conflict" description="In Ref. 4; BAF84169." evidence="8" ref="4">
    <original>I</original>
    <variation>V</variation>
    <location>
        <position position="402"/>
    </location>
</feature>
<feature type="sequence conflict" description="In Ref. 4; BAF84169." evidence="8" ref="4">
    <original>T</original>
    <variation>A</variation>
    <location>
        <position position="664"/>
    </location>
</feature>
<feature type="strand" evidence="11">
    <location>
        <begin position="28"/>
        <end position="30"/>
    </location>
</feature>
<feature type="helix" evidence="11">
    <location>
        <begin position="34"/>
        <end position="36"/>
    </location>
</feature>
<feature type="strand" evidence="11">
    <location>
        <begin position="38"/>
        <end position="40"/>
    </location>
</feature>
<feature type="strand" evidence="11">
    <location>
        <begin position="43"/>
        <end position="45"/>
    </location>
</feature>
<feature type="helix" evidence="11">
    <location>
        <begin position="48"/>
        <end position="50"/>
    </location>
</feature>
<feature type="helix" evidence="11">
    <location>
        <begin position="53"/>
        <end position="62"/>
    </location>
</feature>
<feature type="helix" evidence="11">
    <location>
        <begin position="63"/>
        <end position="65"/>
    </location>
</feature>
<feature type="helix" evidence="11">
    <location>
        <begin position="66"/>
        <end position="71"/>
    </location>
</feature>
<feature type="helix" evidence="11">
    <location>
        <begin position="77"/>
        <end position="85"/>
    </location>
</feature>
<feature type="helix" evidence="11">
    <location>
        <begin position="91"/>
        <end position="93"/>
    </location>
</feature>
<feature type="helix" evidence="11">
    <location>
        <begin position="100"/>
        <end position="116"/>
    </location>
</feature>
<feature type="helix" evidence="11">
    <location>
        <begin position="123"/>
        <end position="125"/>
    </location>
</feature>
<feature type="helix" evidence="11">
    <location>
        <begin position="127"/>
        <end position="129"/>
    </location>
</feature>
<feature type="turn" evidence="11">
    <location>
        <begin position="136"/>
        <end position="138"/>
    </location>
</feature>
<feature type="strand" evidence="10">
    <location>
        <begin position="167"/>
        <end position="169"/>
    </location>
</feature>
<feature type="strand" evidence="9">
    <location>
        <begin position="173"/>
        <end position="175"/>
    </location>
</feature>
<feature type="turn" evidence="12">
    <location>
        <begin position="179"/>
        <end position="181"/>
    </location>
</feature>
<feature type="strand" evidence="12">
    <location>
        <begin position="182"/>
        <end position="185"/>
    </location>
</feature>
<feature type="strand" evidence="9">
    <location>
        <begin position="188"/>
        <end position="190"/>
    </location>
</feature>
<feature type="strand" evidence="12">
    <location>
        <begin position="192"/>
        <end position="194"/>
    </location>
</feature>
<feature type="helix" evidence="12">
    <location>
        <begin position="196"/>
        <end position="224"/>
    </location>
</feature>
<feature type="turn" evidence="12">
    <location>
        <begin position="233"/>
        <end position="236"/>
    </location>
</feature>
<feature type="helix" evidence="12">
    <location>
        <begin position="237"/>
        <end position="252"/>
    </location>
</feature>
<feature type="helix" evidence="12">
    <location>
        <begin position="253"/>
        <end position="255"/>
    </location>
</feature>
<feature type="strand" evidence="12">
    <location>
        <begin position="257"/>
        <end position="260"/>
    </location>
</feature>
<feature type="strand" evidence="9">
    <location>
        <begin position="261"/>
        <end position="264"/>
    </location>
</feature>
<feature type="turn" evidence="9">
    <location>
        <begin position="269"/>
        <end position="272"/>
    </location>
</feature>
<feature type="strand" evidence="10">
    <location>
        <begin position="280"/>
        <end position="283"/>
    </location>
</feature>
<feature type="helix" evidence="12">
    <location>
        <begin position="284"/>
        <end position="312"/>
    </location>
</feature>
<feature type="turn" evidence="12">
    <location>
        <begin position="313"/>
        <end position="315"/>
    </location>
</feature>
<feature type="helix" evidence="12">
    <location>
        <begin position="321"/>
        <end position="325"/>
    </location>
</feature>
<feature type="helix" evidence="12">
    <location>
        <begin position="328"/>
        <end position="344"/>
    </location>
</feature>
<feature type="helix" evidence="10">
    <location>
        <begin position="345"/>
        <end position="347"/>
    </location>
</feature>
<feature type="turn" evidence="10">
    <location>
        <begin position="348"/>
        <end position="350"/>
    </location>
</feature>
<feature type="strand" evidence="10">
    <location>
        <begin position="352"/>
        <end position="354"/>
    </location>
</feature>
<feature type="strand" evidence="10">
    <location>
        <begin position="356"/>
        <end position="359"/>
    </location>
</feature>
<feature type="strand" evidence="12">
    <location>
        <begin position="363"/>
        <end position="366"/>
    </location>
</feature>
<feature type="helix" evidence="12">
    <location>
        <begin position="368"/>
        <end position="374"/>
    </location>
</feature>
<feature type="helix" evidence="12">
    <location>
        <begin position="376"/>
        <end position="401"/>
    </location>
</feature>
<feature type="helix" evidence="12">
    <location>
        <begin position="408"/>
        <end position="410"/>
    </location>
</feature>
<feature type="turn" evidence="12">
    <location>
        <begin position="411"/>
        <end position="413"/>
    </location>
</feature>
<feature type="helix" evidence="12">
    <location>
        <begin position="414"/>
        <end position="442"/>
    </location>
</feature>
<feature type="turn" evidence="12">
    <location>
        <begin position="443"/>
        <end position="445"/>
    </location>
</feature>
<feature type="helix" evidence="12">
    <location>
        <begin position="446"/>
        <end position="451"/>
    </location>
</feature>
<feature type="helix" evidence="12">
    <location>
        <begin position="453"/>
        <end position="456"/>
    </location>
</feature>
<feature type="strand" evidence="12">
    <location>
        <begin position="457"/>
        <end position="459"/>
    </location>
</feature>
<feature type="helix" evidence="12">
    <location>
        <begin position="475"/>
        <end position="478"/>
    </location>
</feature>
<feature type="helix" evidence="12">
    <location>
        <begin position="480"/>
        <end position="488"/>
    </location>
</feature>
<feature type="helix" evidence="12">
    <location>
        <begin position="489"/>
        <end position="494"/>
    </location>
</feature>
<feature type="helix" evidence="12">
    <location>
        <begin position="495"/>
        <end position="498"/>
    </location>
</feature>